<proteinExistence type="inferred from homology"/>
<organism>
    <name type="scientific">Mycoplasma capricolum subsp. capricolum (strain California kid / ATCC 27343 / NCTC 10154)</name>
    <dbReference type="NCBI Taxonomy" id="340047"/>
    <lineage>
        <taxon>Bacteria</taxon>
        <taxon>Bacillati</taxon>
        <taxon>Mycoplasmatota</taxon>
        <taxon>Mollicutes</taxon>
        <taxon>Mycoplasmataceae</taxon>
        <taxon>Mycoplasma</taxon>
    </lineage>
</organism>
<protein>
    <recommendedName>
        <fullName evidence="1">Small ribosomal subunit protein uS2</fullName>
    </recommendedName>
    <alternativeName>
        <fullName evidence="3">30S ribosomal protein S2</fullName>
    </alternativeName>
</protein>
<sequence length="291" mass="32679">MSREITREELSAAGVQYGHQTKRWNPKMKSYIYGVKNKNHIIDLEKTITHLNAAQKLLEFLGSKQQKILFVGTKRSGKNAVKEAALRSGNFYINNRWLGGTLTNLKTILIRIKALWEIEEEEKKGRLSLRTKKEQIKILKEKAKLEKALGGIKQMHKLPAAIVVVDPKGDEIAVKEAKKLNIPVIAICDTNADPDMVDYVIPGNDDLQESVNLIINILVEAYAEGAQIKMNPSVLRTVAPKREPRQINRPVMSSENQAEQQTSVANENVQMTNEPVVQVAEVEKPSEPKAE</sequence>
<name>RS2_MYCCT</name>
<dbReference type="EMBL" id="CP000123">
    <property type="protein sequence ID" value="ABC01283.1"/>
    <property type="molecule type" value="Genomic_DNA"/>
</dbReference>
<dbReference type="RefSeq" id="WP_011387256.1">
    <property type="nucleotide sequence ID" value="NC_007633.1"/>
</dbReference>
<dbReference type="SMR" id="Q2SSA8"/>
<dbReference type="GeneID" id="23778673"/>
<dbReference type="KEGG" id="mcp:MCAP_0371"/>
<dbReference type="HOGENOM" id="CLU_040318_0_1_14"/>
<dbReference type="PhylomeDB" id="Q2SSA8"/>
<dbReference type="Proteomes" id="UP000001928">
    <property type="component" value="Chromosome"/>
</dbReference>
<dbReference type="GO" id="GO:0022627">
    <property type="term" value="C:cytosolic small ribosomal subunit"/>
    <property type="evidence" value="ECO:0007669"/>
    <property type="project" value="TreeGrafter"/>
</dbReference>
<dbReference type="GO" id="GO:0003735">
    <property type="term" value="F:structural constituent of ribosome"/>
    <property type="evidence" value="ECO:0007669"/>
    <property type="project" value="InterPro"/>
</dbReference>
<dbReference type="GO" id="GO:0006412">
    <property type="term" value="P:translation"/>
    <property type="evidence" value="ECO:0007669"/>
    <property type="project" value="UniProtKB-UniRule"/>
</dbReference>
<dbReference type="CDD" id="cd01425">
    <property type="entry name" value="RPS2"/>
    <property type="match status" value="1"/>
</dbReference>
<dbReference type="Gene3D" id="3.40.50.10490">
    <property type="entry name" value="Glucose-6-phosphate isomerase like protein, domain 1"/>
    <property type="match status" value="1"/>
</dbReference>
<dbReference type="Gene3D" id="1.10.287.610">
    <property type="entry name" value="Helix hairpin bin"/>
    <property type="match status" value="1"/>
</dbReference>
<dbReference type="HAMAP" id="MF_00291_B">
    <property type="entry name" value="Ribosomal_uS2_B"/>
    <property type="match status" value="1"/>
</dbReference>
<dbReference type="InterPro" id="IPR001865">
    <property type="entry name" value="Ribosomal_uS2"/>
</dbReference>
<dbReference type="InterPro" id="IPR005706">
    <property type="entry name" value="Ribosomal_uS2_bac/mit/plastid"/>
</dbReference>
<dbReference type="InterPro" id="IPR018130">
    <property type="entry name" value="Ribosomal_uS2_CS"/>
</dbReference>
<dbReference type="InterPro" id="IPR023591">
    <property type="entry name" value="Ribosomal_uS2_flav_dom_sf"/>
</dbReference>
<dbReference type="NCBIfam" id="TIGR01011">
    <property type="entry name" value="rpsB_bact"/>
    <property type="match status" value="1"/>
</dbReference>
<dbReference type="PANTHER" id="PTHR12534">
    <property type="entry name" value="30S RIBOSOMAL PROTEIN S2 PROKARYOTIC AND ORGANELLAR"/>
    <property type="match status" value="1"/>
</dbReference>
<dbReference type="PANTHER" id="PTHR12534:SF0">
    <property type="entry name" value="SMALL RIBOSOMAL SUBUNIT PROTEIN US2M"/>
    <property type="match status" value="1"/>
</dbReference>
<dbReference type="Pfam" id="PF00318">
    <property type="entry name" value="Ribosomal_S2"/>
    <property type="match status" value="1"/>
</dbReference>
<dbReference type="PRINTS" id="PR00395">
    <property type="entry name" value="RIBOSOMALS2"/>
</dbReference>
<dbReference type="SUPFAM" id="SSF52313">
    <property type="entry name" value="Ribosomal protein S2"/>
    <property type="match status" value="1"/>
</dbReference>
<dbReference type="PROSITE" id="PS00963">
    <property type="entry name" value="RIBOSOMAL_S2_2"/>
    <property type="match status" value="1"/>
</dbReference>
<feature type="chain" id="PRO_1000071949" description="Small ribosomal subunit protein uS2">
    <location>
        <begin position="1"/>
        <end position="291"/>
    </location>
</feature>
<feature type="region of interest" description="Disordered" evidence="2">
    <location>
        <begin position="241"/>
        <end position="270"/>
    </location>
</feature>
<feature type="compositionally biased region" description="Polar residues" evidence="2">
    <location>
        <begin position="251"/>
        <end position="270"/>
    </location>
</feature>
<comment type="similarity">
    <text evidence="1">Belongs to the universal ribosomal protein uS2 family.</text>
</comment>
<reference key="1">
    <citation type="submission" date="2005-09" db="EMBL/GenBank/DDBJ databases">
        <authorList>
            <person name="Glass J.I."/>
            <person name="Lartigue C."/>
            <person name="Pfannkoch C."/>
            <person name="Baden-Tillson H."/>
            <person name="Smith H.O."/>
            <person name="Venter J.C."/>
            <person name="Roske K."/>
            <person name="Wise K.S."/>
            <person name="Calcutt M.J."/>
            <person name="Nelson W.C."/>
            <person name="Nierman W.C."/>
        </authorList>
    </citation>
    <scope>NUCLEOTIDE SEQUENCE [LARGE SCALE GENOMIC DNA]</scope>
    <source>
        <strain>California kid / ATCC 27343 / NCTC 10154</strain>
    </source>
</reference>
<gene>
    <name evidence="1" type="primary">rpsB</name>
    <name type="ordered locus">MCAP_0371</name>
</gene>
<keyword id="KW-0687">Ribonucleoprotein</keyword>
<keyword id="KW-0689">Ribosomal protein</keyword>
<accession>Q2SSA8</accession>
<evidence type="ECO:0000255" key="1">
    <source>
        <dbReference type="HAMAP-Rule" id="MF_00291"/>
    </source>
</evidence>
<evidence type="ECO:0000256" key="2">
    <source>
        <dbReference type="SAM" id="MobiDB-lite"/>
    </source>
</evidence>
<evidence type="ECO:0000305" key="3"/>